<comment type="subcellular location">
    <subcellularLocation>
        <location>Mitochondrion</location>
    </subcellularLocation>
</comment>
<comment type="similarity">
    <text evidence="1">Belongs to the universal ribosomal protein uS14 family.</text>
</comment>
<gene>
    <name type="primary">RPS14</name>
</gene>
<name>RT14_OENBE</name>
<sequence>MEKRNIRDHKRRLLATKYELRRKLYKAFCNDPALPSDMRDKHRYKLSKLPRNSSFARVRNRCISTGRPRSVYEFFRISRIVFRGLASRGPLMGIKKSSW</sequence>
<proteinExistence type="inferred from homology"/>
<protein>
    <recommendedName>
        <fullName evidence="1">Small ribosomal subunit protein uS14m</fullName>
    </recommendedName>
    <alternativeName>
        <fullName>Ribosomal protein S14, mitochondrial</fullName>
    </alternativeName>
</protein>
<evidence type="ECO:0000305" key="1"/>
<dbReference type="EMBL" id="X17030">
    <property type="protein sequence ID" value="CAA34891.1"/>
    <property type="molecule type" value="Genomic_DNA"/>
</dbReference>
<dbReference type="EMBL" id="X74164">
    <property type="status" value="NOT_ANNOTATED_CDS"/>
    <property type="molecule type" value="Genomic_DNA"/>
</dbReference>
<dbReference type="PIR" id="S07889">
    <property type="entry name" value="R3OB4B"/>
</dbReference>
<dbReference type="SMR" id="P14875"/>
<dbReference type="GO" id="GO:0005739">
    <property type="term" value="C:mitochondrion"/>
    <property type="evidence" value="ECO:0007669"/>
    <property type="project" value="UniProtKB-SubCell"/>
</dbReference>
<dbReference type="GO" id="GO:0015935">
    <property type="term" value="C:small ribosomal subunit"/>
    <property type="evidence" value="ECO:0007669"/>
    <property type="project" value="TreeGrafter"/>
</dbReference>
<dbReference type="GO" id="GO:0003735">
    <property type="term" value="F:structural constituent of ribosome"/>
    <property type="evidence" value="ECO:0007669"/>
    <property type="project" value="InterPro"/>
</dbReference>
<dbReference type="GO" id="GO:0006412">
    <property type="term" value="P:translation"/>
    <property type="evidence" value="ECO:0007669"/>
    <property type="project" value="InterPro"/>
</dbReference>
<dbReference type="FunFam" id="1.10.287.1480:FF:000001">
    <property type="entry name" value="30S ribosomal protein S14"/>
    <property type="match status" value="1"/>
</dbReference>
<dbReference type="FunFam" id="4.10.830.10:FF:000004">
    <property type="entry name" value="Succinate dehydrogenase [ubiquinone] iron-sulfur subunit, mitochondrial"/>
    <property type="match status" value="1"/>
</dbReference>
<dbReference type="Gene3D" id="1.10.287.1480">
    <property type="match status" value="1"/>
</dbReference>
<dbReference type="InterPro" id="IPR001209">
    <property type="entry name" value="Ribosomal_uS14"/>
</dbReference>
<dbReference type="InterPro" id="IPR018271">
    <property type="entry name" value="Ribosomal_uS14_CS"/>
</dbReference>
<dbReference type="NCBIfam" id="NF006477">
    <property type="entry name" value="PRK08881.1"/>
    <property type="match status" value="1"/>
</dbReference>
<dbReference type="PANTHER" id="PTHR19836">
    <property type="entry name" value="30S RIBOSOMAL PROTEIN S14"/>
    <property type="match status" value="1"/>
</dbReference>
<dbReference type="PANTHER" id="PTHR19836:SF30">
    <property type="entry name" value="RIBOSOMAL PROTEIN S14"/>
    <property type="match status" value="1"/>
</dbReference>
<dbReference type="Pfam" id="PF00253">
    <property type="entry name" value="Ribosomal_S14"/>
    <property type="match status" value="1"/>
</dbReference>
<dbReference type="SUPFAM" id="SSF57716">
    <property type="entry name" value="Glucocorticoid receptor-like (DNA-binding domain)"/>
    <property type="match status" value="1"/>
</dbReference>
<dbReference type="PROSITE" id="PS00527">
    <property type="entry name" value="RIBOSOMAL_S14"/>
    <property type="match status" value="1"/>
</dbReference>
<geneLocation type="mitochondrion"/>
<reference key="1">
    <citation type="journal article" date="1990" name="Nucleic Acids Res.">
        <title>Ribosomal protein S14 transcripts are edited in Oenothera mitochondria.</title>
        <authorList>
            <person name="Schuster W."/>
            <person name="Unseld M."/>
            <person name="Wissinger B."/>
            <person name="Brennicke A."/>
        </authorList>
    </citation>
    <scope>NUCLEOTIDE SEQUENCE [GENOMIC DNA]</scope>
    <source>
        <strain>cv. Munzia</strain>
    </source>
</reference>
<reference key="2">
    <citation type="journal article" date="1994" name="Plant Mol. Biol.">
        <title>The highly edited orf206 in Oenothera mitochondria may encode a component of a heme transporter involved in cytochrome c biogenesis.</title>
        <authorList>
            <person name="Schuster W."/>
        </authorList>
    </citation>
    <scope>NUCLEOTIDE SEQUENCE [GENOMIC DNA] OF 1-15</scope>
</reference>
<feature type="chain" id="PRO_0000131006" description="Small ribosomal subunit protein uS14m">
    <location>
        <begin position="1"/>
        <end position="99"/>
    </location>
</feature>
<keyword id="KW-0496">Mitochondrion</keyword>
<keyword id="KW-0687">Ribonucleoprotein</keyword>
<keyword id="KW-0689">Ribosomal protein</keyword>
<organism>
    <name type="scientific">Oenothera berteroana</name>
    <name type="common">Bertero's evening primrose</name>
    <dbReference type="NCBI Taxonomy" id="3950"/>
    <lineage>
        <taxon>Eukaryota</taxon>
        <taxon>Viridiplantae</taxon>
        <taxon>Streptophyta</taxon>
        <taxon>Embryophyta</taxon>
        <taxon>Tracheophyta</taxon>
        <taxon>Spermatophyta</taxon>
        <taxon>Magnoliopsida</taxon>
        <taxon>eudicotyledons</taxon>
        <taxon>Gunneridae</taxon>
        <taxon>Pentapetalae</taxon>
        <taxon>rosids</taxon>
        <taxon>malvids</taxon>
        <taxon>Myrtales</taxon>
        <taxon>Onagraceae</taxon>
        <taxon>Onagroideae</taxon>
        <taxon>Onagreae</taxon>
        <taxon>Oenothera</taxon>
    </lineage>
</organism>
<accession>P14875</accession>